<gene>
    <name type="primary">repA</name>
</gene>
<organism>
    <name type="scientific">Escherichia coli</name>
    <dbReference type="NCBI Taxonomy" id="562"/>
    <lineage>
        <taxon>Bacteria</taxon>
        <taxon>Pseudomonadati</taxon>
        <taxon>Pseudomonadota</taxon>
        <taxon>Gammaproteobacteria</taxon>
        <taxon>Enterobacterales</taxon>
        <taxon>Enterobacteriaceae</taxon>
        <taxon>Escherichia</taxon>
    </lineage>
</organism>
<evidence type="ECO:0000305" key="1"/>
<accession>P24042</accession>
<keyword id="KW-0903">Direct protein sequencing</keyword>
<keyword id="KW-0235">DNA replication</keyword>
<keyword id="KW-0238">DNA-binding</keyword>
<keyword id="KW-0614">Plasmid</keyword>
<geneLocation type="plasmid">
    <name>P1</name>
</geneLocation>
<name>REP5_ECOLX</name>
<feature type="chain" id="PRO_0000068301" description="Replication protein RepA">
    <location>
        <begin position="1"/>
        <end position="286"/>
    </location>
</feature>
<reference key="1">
    <citation type="journal article" date="1986" name="J. Biol. Chem.">
        <title>P1 plasmid replication. Purification and DNA-binding activity of the replication protein RepA.</title>
        <authorList>
            <person name="Abeles A.L."/>
        </authorList>
    </citation>
    <scope>NUCLEOTIDE SEQUENCE [GENOMIC DNA]</scope>
    <scope>PROTEIN SEQUENCE OF 1-15</scope>
</reference>
<reference key="2">
    <citation type="journal article" date="1990" name="J. Bacteriol.">
        <title>Location of a P1 plasmid replication inhibitor determinant within the initiator gene.</title>
        <authorList>
            <person name="Muraiso K."/>
            <person name="Mukhopadhyay G."/>
            <person name="Chattoraj D.K."/>
        </authorList>
    </citation>
    <scope>NUCLEOTIDE SEQUENCE [GENOMIC DNA]</scope>
</reference>
<dbReference type="EMBL" id="K02380">
    <property type="protein sequence ID" value="AAA99229.1"/>
    <property type="molecule type" value="Genomic_DNA"/>
</dbReference>
<dbReference type="PIR" id="A37764">
    <property type="entry name" value="A37764"/>
</dbReference>
<dbReference type="RefSeq" id="WP_001076427.1">
    <property type="nucleotide sequence ID" value="NZ_WXYW01000004.1"/>
</dbReference>
<dbReference type="SMR" id="P24042"/>
<dbReference type="GeneID" id="86863715"/>
<dbReference type="KEGG" id="vg:2777439"/>
<dbReference type="GO" id="GO:0003677">
    <property type="term" value="F:DNA binding"/>
    <property type="evidence" value="ECO:0007669"/>
    <property type="project" value="UniProtKB-KW"/>
</dbReference>
<dbReference type="GO" id="GO:0003887">
    <property type="term" value="F:DNA-directed DNA polymerase activity"/>
    <property type="evidence" value="ECO:0007669"/>
    <property type="project" value="InterPro"/>
</dbReference>
<dbReference type="GO" id="GO:0006270">
    <property type="term" value="P:DNA replication initiation"/>
    <property type="evidence" value="ECO:0007669"/>
    <property type="project" value="InterPro"/>
</dbReference>
<dbReference type="InterPro" id="IPR000525">
    <property type="entry name" value="Initiator_Rep_WH1"/>
</dbReference>
<dbReference type="Pfam" id="PF01051">
    <property type="entry name" value="Rep3_N"/>
    <property type="match status" value="1"/>
</dbReference>
<comment type="function">
    <text>RepA is essential for origin function, autoregulates its own synthesis from the promoter, and, when overproduced, blocks origin function.</text>
</comment>
<comment type="similarity">
    <text evidence="1">Belongs to the initiator RepB protein family.</text>
</comment>
<proteinExistence type="evidence at protein level"/>
<sequence length="286" mass="32220">MNQSFISDILYADIESKAKELTVNSNNTVQPVALMRLGVFVPKPSKSKGESKEIDATKAFSQLEIAKAEGYDDIKITGPRLDMDTDFKTWIGVIYAFSKYGLSSNTIQLSFQEFAKACGFPSKRLDAKLRLTIHESLGRLRNKGIAFKRGKDAKGGYQTGLLKVGRFDADLDLIELEADSKLWELFQLDYRVLLQHHALRALPKKEAAQAIYTFIESLPQNPLPLSFARIRERLALQSAVGEQNRIIKKAIEQLKTIGYLDCSIEKKGRESFVIVHSRNPKLKLPE</sequence>
<protein>
    <recommendedName>
        <fullName>Replication protein RepA</fullName>
    </recommendedName>
</protein>